<comment type="function">
    <text evidence="1">Part of an energy-coupled inorganic carbon pump.</text>
</comment>
<comment type="cofactor">
    <cofactor evidence="1">
        <name>Zn(2+)</name>
        <dbReference type="ChEBI" id="CHEBI:29105"/>
    </cofactor>
</comment>
<comment type="subunit">
    <text evidence="1">Forms a complex with DabB.</text>
</comment>
<comment type="subcellular location">
    <subcellularLocation>
        <location evidence="1">Cell inner membrane</location>
        <topology evidence="1">Peripheral membrane protein</topology>
    </subcellularLocation>
</comment>
<comment type="similarity">
    <text evidence="1">Belongs to the inorganic carbon transporter (TC 9.A.2) DabA family.</text>
</comment>
<proteinExistence type="inferred from homology"/>
<dbReference type="EMBL" id="AP008229">
    <property type="protein sequence ID" value="BAE68819.1"/>
    <property type="molecule type" value="Genomic_DNA"/>
</dbReference>
<dbReference type="RefSeq" id="WP_011408453.1">
    <property type="nucleotide sequence ID" value="NC_007705.1"/>
</dbReference>
<dbReference type="KEGG" id="xom:XOO2064"/>
<dbReference type="HOGENOM" id="CLU_009885_1_0_6"/>
<dbReference type="GO" id="GO:0005886">
    <property type="term" value="C:plasma membrane"/>
    <property type="evidence" value="ECO:0007669"/>
    <property type="project" value="UniProtKB-SubCell"/>
</dbReference>
<dbReference type="GO" id="GO:0008270">
    <property type="term" value="F:zinc ion binding"/>
    <property type="evidence" value="ECO:0007669"/>
    <property type="project" value="UniProtKB-UniRule"/>
</dbReference>
<dbReference type="HAMAP" id="MF_01871">
    <property type="entry name" value="DabA"/>
    <property type="match status" value="1"/>
</dbReference>
<dbReference type="InterPro" id="IPR018752">
    <property type="entry name" value="DabA"/>
</dbReference>
<dbReference type="PANTHER" id="PTHR38344:SF1">
    <property type="entry name" value="INORGANIC CARBON TRANSPORTER SUBUNIT DABA-RELATED"/>
    <property type="match status" value="1"/>
</dbReference>
<dbReference type="PANTHER" id="PTHR38344">
    <property type="entry name" value="UPF0753 PROTEIN AQ_863"/>
    <property type="match status" value="1"/>
</dbReference>
<dbReference type="Pfam" id="PF10070">
    <property type="entry name" value="DabA"/>
    <property type="match status" value="1"/>
</dbReference>
<protein>
    <recommendedName>
        <fullName evidence="1">Probable inorganic carbon transporter subunit DabA</fullName>
    </recommendedName>
</protein>
<name>DABA_XANOM</name>
<reference key="1">
    <citation type="journal article" date="2005" name="Jpn. Agric. Res. Q.">
        <title>Genome sequence of Xanthomonas oryzae pv. oryzae suggests contribution of large numbers of effector genes and insertion sequences to its race diversity.</title>
        <authorList>
            <person name="Ochiai H."/>
            <person name="Inoue Y."/>
            <person name="Takeya M."/>
            <person name="Sasaki A."/>
            <person name="Kaku H."/>
        </authorList>
    </citation>
    <scope>NUCLEOTIDE SEQUENCE [LARGE SCALE GENOMIC DNA]</scope>
    <source>
        <strain>MAFF 311018</strain>
    </source>
</reference>
<evidence type="ECO:0000255" key="1">
    <source>
        <dbReference type="HAMAP-Rule" id="MF_01871"/>
    </source>
</evidence>
<keyword id="KW-0997">Cell inner membrane</keyword>
<keyword id="KW-1003">Cell membrane</keyword>
<keyword id="KW-0472">Membrane</keyword>
<keyword id="KW-0479">Metal-binding</keyword>
<keyword id="KW-0813">Transport</keyword>
<keyword id="KW-0862">Zinc</keyword>
<sequence>MLMTTTTIAMSLSHDVIIAAAQRAARAIPPLWPLASSVAVNPFLGQASEPLEVAAARLRRASGIAVTMPRSWYAERLQSGEITEDDLQAAFQTAPAARRPPNVSALKHAIKVARPAPQAIPTVAELARDVTAIDWPGIVNERIGHWAAGYFDQGQALWAVGQSGGAYSTWRIIATHDLTPEIAGLAGFSQSVSDAPATAEDALVDCVARLGLSPDALDGYFHRLLTTLGGWGQVARYRLWQAELNGGTDACVTDLLAIRMLWEAALLHNGGSALVPGWQSAIAAYAAPVAASSDDVVDSILQEAAERAAQRKLNTVLAAPSSARLSRGRLTLQMAFCIDVRSEVFRRALESLDSGITTLGFAGFFGFGIGHRRFASDVVEARLPVLLSPGVVTCAGEPTPAANAAELSARITARAKRAWGRFKLAAISSFAFVEATGPIYIAKLLRDGLALARHHAPTDPAPRPAHELDLDTRLTMAARILKAMSFTSNFARLVVLAGHGAKVVNNPHASALHCGACGGYSGEVNARLLASLLNDHQVRAGLAERGIVIPADTLFLAALHDTTTDAVTLFADDHPSPTHAQDLAQVTQWLAAAGALARGERALRLPRANRSQDIAHRARDWAEIRPEWALAGCQAFIAAPRSRSAGRDLAGRAFLHDYDWRCDHGFGVLELILTAPVVVASWISLQYYGSTVAPERFGAGNKLLHNVTGGIGVVEGNGGILRTGLPWQSVHDGERLIHEPLRLSVLIEAPTEAIGAILERHPQLRALFDNRWLHLFALDDEGRMARRYIGDLSWETYVGDASSQSNRASTLA</sequence>
<accession>Q2P3Q8</accession>
<feature type="chain" id="PRO_0000387328" description="Probable inorganic carbon transporter subunit DabA">
    <location>
        <begin position="1"/>
        <end position="812"/>
    </location>
</feature>
<feature type="binding site" evidence="1">
    <location>
        <position position="337"/>
    </location>
    <ligand>
        <name>Zn(2+)</name>
        <dbReference type="ChEBI" id="CHEBI:29105"/>
    </ligand>
</feature>
<feature type="binding site" evidence="1">
    <location>
        <position position="339"/>
    </location>
    <ligand>
        <name>Zn(2+)</name>
        <dbReference type="ChEBI" id="CHEBI:29105"/>
    </ligand>
</feature>
<feature type="binding site" evidence="1">
    <location>
        <position position="499"/>
    </location>
    <ligand>
        <name>Zn(2+)</name>
        <dbReference type="ChEBI" id="CHEBI:29105"/>
    </ligand>
</feature>
<feature type="binding site" evidence="1">
    <location>
        <position position="514"/>
    </location>
    <ligand>
        <name>Zn(2+)</name>
        <dbReference type="ChEBI" id="CHEBI:29105"/>
    </ligand>
</feature>
<gene>
    <name evidence="1" type="primary">dabA</name>
    <name type="ordered locus">XOO2064</name>
</gene>
<organism>
    <name type="scientific">Xanthomonas oryzae pv. oryzae (strain MAFF 311018)</name>
    <dbReference type="NCBI Taxonomy" id="342109"/>
    <lineage>
        <taxon>Bacteria</taxon>
        <taxon>Pseudomonadati</taxon>
        <taxon>Pseudomonadota</taxon>
        <taxon>Gammaproteobacteria</taxon>
        <taxon>Lysobacterales</taxon>
        <taxon>Lysobacteraceae</taxon>
        <taxon>Xanthomonas</taxon>
    </lineage>
</organism>